<feature type="chain" id="PRO_0000399406" description="Parvalbumin beta 2">
    <location>
        <begin position="1"/>
        <end position="108"/>
    </location>
</feature>
<feature type="domain" description="EF-hand 1" evidence="5">
    <location>
        <begin position="38"/>
        <end position="73"/>
    </location>
</feature>
<feature type="domain" description="EF-hand 2" evidence="5">
    <location>
        <begin position="77"/>
        <end position="108"/>
    </location>
</feature>
<feature type="binding site" evidence="1 5">
    <location>
        <position position="51"/>
    </location>
    <ligand>
        <name>Ca(2+)</name>
        <dbReference type="ChEBI" id="CHEBI:29108"/>
        <label>1</label>
    </ligand>
</feature>
<feature type="binding site" evidence="1 5">
    <location>
        <position position="53"/>
    </location>
    <ligand>
        <name>Ca(2+)</name>
        <dbReference type="ChEBI" id="CHEBI:29108"/>
        <label>1</label>
    </ligand>
</feature>
<feature type="binding site" evidence="1 5">
    <location>
        <position position="55"/>
    </location>
    <ligand>
        <name>Ca(2+)</name>
        <dbReference type="ChEBI" id="CHEBI:29108"/>
        <label>1</label>
    </ligand>
</feature>
<feature type="binding site" evidence="1">
    <location>
        <position position="57"/>
    </location>
    <ligand>
        <name>Ca(2+)</name>
        <dbReference type="ChEBI" id="CHEBI:29108"/>
        <label>1</label>
    </ligand>
</feature>
<feature type="binding site" evidence="1">
    <location>
        <position position="59"/>
    </location>
    <ligand>
        <name>Ca(2+)</name>
        <dbReference type="ChEBI" id="CHEBI:29108"/>
        <label>1</label>
    </ligand>
</feature>
<feature type="binding site" evidence="1 5">
    <location>
        <position position="62"/>
    </location>
    <ligand>
        <name>Ca(2+)</name>
        <dbReference type="ChEBI" id="CHEBI:29108"/>
        <label>1</label>
    </ligand>
</feature>
<feature type="binding site" evidence="1 5">
    <location>
        <position position="90"/>
    </location>
    <ligand>
        <name>Ca(2+)</name>
        <dbReference type="ChEBI" id="CHEBI:29108"/>
        <label>2</label>
    </ligand>
</feature>
<feature type="binding site" evidence="1 5">
    <location>
        <position position="92"/>
    </location>
    <ligand>
        <name>Ca(2+)</name>
        <dbReference type="ChEBI" id="CHEBI:29108"/>
        <label>2</label>
    </ligand>
</feature>
<feature type="binding site" evidence="1 5">
    <location>
        <position position="94"/>
    </location>
    <ligand>
        <name>Ca(2+)</name>
        <dbReference type="ChEBI" id="CHEBI:29108"/>
        <label>2</label>
    </ligand>
</feature>
<feature type="binding site" evidence="5">
    <location>
        <position position="96"/>
    </location>
    <ligand>
        <name>Ca(2+)</name>
        <dbReference type="ChEBI" id="CHEBI:29108"/>
        <label>2</label>
    </ligand>
</feature>
<feature type="binding site" evidence="1 5">
    <location>
        <position position="101"/>
    </location>
    <ligand>
        <name>Ca(2+)</name>
        <dbReference type="ChEBI" id="CHEBI:29108"/>
        <label>2</label>
    </ligand>
</feature>
<feature type="modified residue" description="N-acetylalanine" evidence="6">
    <location>
        <position position="1"/>
    </location>
</feature>
<feature type="unsure residue" description="I or L" evidence="6">
    <location>
        <position position="5"/>
    </location>
</feature>
<feature type="unsure residue" description="L or I" evidence="6">
    <location>
        <position position="6"/>
    </location>
</feature>
<feature type="unsure residue" description="I or L" evidence="6">
    <location>
        <position position="11"/>
    </location>
</feature>
<feature type="unsure residue" description="L or I" evidence="6">
    <location>
        <position position="15"/>
    </location>
</feature>
<feature type="unsure residue" description="K or Q" evidence="6">
    <location>
        <position position="19"/>
    </location>
</feature>
<feature type="unsure residue" description="K or Q" evidence="6">
    <location>
        <position position="32"/>
    </location>
</feature>
<feature type="unsure residue" description="I or L" evidence="6">
    <location>
        <position position="33"/>
    </location>
</feature>
<feature type="unsure residue" description="L or I" evidence="6">
    <location>
        <position position="35"/>
    </location>
</feature>
<feature type="unsure residue" description="K or Q" evidence="6">
    <location>
        <position position="36"/>
    </location>
</feature>
<feature type="unsure residue" description="K or Q" evidence="6">
    <location>
        <position position="38"/>
    </location>
</feature>
<feature type="unsure residue" description="I or L" evidence="6">
    <location>
        <position position="43"/>
    </location>
</feature>
<feature type="unsure residue" description="K or Q" evidence="6">
    <location>
        <position position="44"/>
    </location>
</feature>
<feature type="unsure residue" description="K or Q" evidence="6">
    <location>
        <position position="45"/>
    </location>
</feature>
<feature type="unsure residue" description="I or L" evidence="6">
    <location>
        <position position="49"/>
    </location>
</feature>
<feature type="unsure residue" description="I or L" evidence="6">
    <location>
        <position position="50"/>
    </location>
</feature>
<feature type="unsure residue" description="Q or K" evidence="6">
    <location>
        <position position="52"/>
    </location>
</feature>
<feature type="unsure residue" description="K or Q" evidence="6">
    <location>
        <position position="54"/>
    </location>
</feature>
<feature type="unsure residue" description="L or I" evidence="6">
    <location>
        <position position="63"/>
    </location>
</feature>
<feature type="unsure residue" description="K or Q" evidence="6">
    <location>
        <position position="64"/>
    </location>
</feature>
<feature type="unsure residue" description="L or I" evidence="6">
    <location>
        <position position="65"/>
    </location>
</feature>
<feature type="unsure residue" description="L or I" evidence="6">
    <location>
        <position position="67"/>
    </location>
</feature>
<feature type="unsure residue" description="Q or K" evidence="6">
    <location>
        <position position="68"/>
    </location>
</feature>
<feature type="unsure residue" description="L or I" evidence="6">
    <location>
        <position position="77"/>
    </location>
</feature>
<feature type="unsure residue" description="L or I" evidence="6">
    <location>
        <position position="86"/>
    </location>
</feature>
<feature type="unsure residue" description="K or Q" evidence="6">
    <location>
        <position position="87"/>
    </location>
</feature>
<feature type="unsure residue" description="K or Q" evidence="6">
    <location>
        <position position="96"/>
    </location>
</feature>
<feature type="unsure residue" description="I or L" evidence="6">
    <location>
        <position position="97"/>
    </location>
</feature>
<feature type="unsure residue" description="K or Q" evidence="6">
    <location>
        <position position="107"/>
    </location>
</feature>
<dbReference type="SMR" id="P86747"/>
<dbReference type="iPTMnet" id="P86747"/>
<dbReference type="GO" id="GO:0005737">
    <property type="term" value="C:cytoplasm"/>
    <property type="evidence" value="ECO:0007669"/>
    <property type="project" value="TreeGrafter"/>
</dbReference>
<dbReference type="GO" id="GO:0005509">
    <property type="term" value="F:calcium ion binding"/>
    <property type="evidence" value="ECO:0007669"/>
    <property type="project" value="InterPro"/>
</dbReference>
<dbReference type="CDD" id="cd16255">
    <property type="entry name" value="EFh_parvalbumin_beta"/>
    <property type="match status" value="1"/>
</dbReference>
<dbReference type="FunFam" id="1.10.238.10:FF:000060">
    <property type="entry name" value="Parvalbumin, thymic"/>
    <property type="match status" value="1"/>
</dbReference>
<dbReference type="Gene3D" id="1.10.238.10">
    <property type="entry name" value="EF-hand"/>
    <property type="match status" value="1"/>
</dbReference>
<dbReference type="InterPro" id="IPR011992">
    <property type="entry name" value="EF-hand-dom_pair"/>
</dbReference>
<dbReference type="InterPro" id="IPR018247">
    <property type="entry name" value="EF_Hand_1_Ca_BS"/>
</dbReference>
<dbReference type="InterPro" id="IPR002048">
    <property type="entry name" value="EF_hand_dom"/>
</dbReference>
<dbReference type="InterPro" id="IPR008080">
    <property type="entry name" value="Parvalbumin"/>
</dbReference>
<dbReference type="PANTHER" id="PTHR11653:SF12">
    <property type="entry name" value="PARVALBUMIN"/>
    <property type="match status" value="1"/>
</dbReference>
<dbReference type="PANTHER" id="PTHR11653">
    <property type="entry name" value="PARVALBUMIN ALPHA"/>
    <property type="match status" value="1"/>
</dbReference>
<dbReference type="Pfam" id="PF13499">
    <property type="entry name" value="EF-hand_7"/>
    <property type="match status" value="1"/>
</dbReference>
<dbReference type="PRINTS" id="PR01697">
    <property type="entry name" value="PARVALBUMIN"/>
</dbReference>
<dbReference type="SUPFAM" id="SSF47473">
    <property type="entry name" value="EF-hand"/>
    <property type="match status" value="1"/>
</dbReference>
<dbReference type="PROSITE" id="PS00018">
    <property type="entry name" value="EF_HAND_1"/>
    <property type="match status" value="2"/>
</dbReference>
<dbReference type="PROSITE" id="PS50222">
    <property type="entry name" value="EF_HAND_2"/>
    <property type="match status" value="2"/>
</dbReference>
<name>PRVB2_MERAA</name>
<evidence type="ECO:0000250" key="1">
    <source>
        <dbReference type="UniProtKB" id="P02621"/>
    </source>
</evidence>
<evidence type="ECO:0000250" key="2">
    <source>
        <dbReference type="UniProtKB" id="P02622"/>
    </source>
</evidence>
<evidence type="ECO:0000250" key="3">
    <source>
        <dbReference type="UniProtKB" id="P02624"/>
    </source>
</evidence>
<evidence type="ECO:0000255" key="4"/>
<evidence type="ECO:0000255" key="5">
    <source>
        <dbReference type="PROSITE-ProRule" id="PRU00448"/>
    </source>
</evidence>
<evidence type="ECO:0000269" key="6">
    <source>
    </source>
</evidence>
<evidence type="ECO:0000303" key="7">
    <source>
    </source>
</evidence>
<evidence type="ECO:0000305" key="8"/>
<accession>P86747</accession>
<keyword id="KW-0007">Acetylation</keyword>
<keyword id="KW-0020">Allergen</keyword>
<keyword id="KW-0106">Calcium</keyword>
<keyword id="KW-0903">Direct protein sequencing</keyword>
<keyword id="KW-0479">Metal-binding</keyword>
<keyword id="KW-0514">Muscle protein</keyword>
<keyword id="KW-0677">Repeat</keyword>
<proteinExistence type="evidence at protein level"/>
<organism>
    <name type="scientific">Merluccius australis australis</name>
    <name type="common">Austral hake</name>
    <dbReference type="NCBI Taxonomy" id="307686"/>
    <lineage>
        <taxon>Eukaryota</taxon>
        <taxon>Metazoa</taxon>
        <taxon>Chordata</taxon>
        <taxon>Craniata</taxon>
        <taxon>Vertebrata</taxon>
        <taxon>Euteleostomi</taxon>
        <taxon>Actinopterygii</taxon>
        <taxon>Neopterygii</taxon>
        <taxon>Teleostei</taxon>
        <taxon>Neoteleostei</taxon>
        <taxon>Acanthomorphata</taxon>
        <taxon>Zeiogadaria</taxon>
        <taxon>Gadariae</taxon>
        <taxon>Gadiformes</taxon>
        <taxon>Gadoidei</taxon>
        <taxon>Merlucciidae</taxon>
        <taxon>Merluccius</taxon>
    </lineage>
</organism>
<protein>
    <recommendedName>
        <fullName evidence="7">Parvalbumin beta 2</fullName>
    </recommendedName>
</protein>
<comment type="function">
    <text evidence="2 3">In muscle, parvalbumin is thought to be involved in relaxation after contraction. It binds two calcium ions (By similarity).</text>
</comment>
<comment type="mass spectrometry"/>
<comment type="miscellaneous">
    <text evidence="2 6">Is regarded as an important allergen.</text>
</comment>
<comment type="miscellaneous">
    <text evidence="6">On the 2D-gel the determined pI of this protein is: 4.30, its MW is: 11.30 kDa.</text>
</comment>
<comment type="similarity">
    <text evidence="4">Belongs to the parvalbumin family.</text>
</comment>
<sequence>AFAGILADADITAALAACKAEGTFTHGEFFTKIGLKGKSAADIKKVFGIIDQDKSDFVEEDELKLFLQNFSAGARALTDAETATFLKAGDSDGDGKIGVDEFAAMVKG</sequence>
<reference evidence="8" key="1">
    <citation type="journal article" date="2010" name="J. Proteome Res.">
        <title>Extensive de novo sequencing of new parvalbumin isoforms using a novel combination of bottom-up proteomics, accurate molecular mass measurement by FTICR-MS, and selected MS/MS ion monitoring.</title>
        <authorList>
            <person name="Carrera M."/>
            <person name="Canas B."/>
            <person name="Vazquez J."/>
            <person name="Gallardo J.M."/>
        </authorList>
    </citation>
    <scope>PROTEIN SEQUENCE</scope>
    <scope>MASS SPECTROMETRY</scope>
    <scope>ACETYLATION AT ALA-1</scope>
    <source>
        <tissue evidence="6">Muscle</tissue>
    </source>
</reference>